<protein>
    <recommendedName>
        <fullName>Cell wall-associated protease</fullName>
        <ecNumber>3.4.21.-</ecNumber>
    </recommendedName>
    <component>
        <recommendedName>
            <fullName>Cell wall-associated polypeptide CWBP23</fullName>
            <shortName>CWBP23</shortName>
        </recommendedName>
    </component>
    <component>
        <recommendedName>
            <fullName>Cell wall-associated polypeptide CWBP52</fullName>
            <shortName>CWBP52</shortName>
        </recommendedName>
    </component>
</protein>
<reference key="1">
    <citation type="journal article" date="1996" name="Microbiology">
        <title>The wprA gene of Bacillus subtilis 168, expressed during exponential growth, encodes a cell-wall-associated protease.</title>
        <authorList>
            <person name="Margot P."/>
            <person name="Karamata D."/>
        </authorList>
    </citation>
    <scope>NUCLEOTIDE SEQUENCE [GENOMIC DNA]</scope>
    <scope>PROTEIN SEQUENCE OF 32-54 AND 414-428</scope>
    <scope>FUNCTION AS A PROTEASE</scope>
    <scope>ACTIVITY REGULATION</scope>
    <scope>DISRUPTION PHENOTYPE</scope>
    <source>
        <strain>168</strain>
    </source>
</reference>
<reference key="2">
    <citation type="journal article" date="1997" name="Microbiology">
        <title>Sequencing of regions downstream of addA (98 degrees) and citG (289 degrees) in Bacillus subtilis.</title>
        <authorList>
            <person name="Medina N."/>
            <person name="Vannier F."/>
            <person name="Roche B."/>
            <person name="Autret S."/>
            <person name="Levine A."/>
            <person name="Seror S.J."/>
        </authorList>
    </citation>
    <scope>NUCLEOTIDE SEQUENCE [GENOMIC DNA]</scope>
    <source>
        <strain>168</strain>
    </source>
</reference>
<reference key="3">
    <citation type="journal article" date="1997" name="Nature">
        <title>The complete genome sequence of the Gram-positive bacterium Bacillus subtilis.</title>
        <authorList>
            <person name="Kunst F."/>
            <person name="Ogasawara N."/>
            <person name="Moszer I."/>
            <person name="Albertini A.M."/>
            <person name="Alloni G."/>
            <person name="Azevedo V."/>
            <person name="Bertero M.G."/>
            <person name="Bessieres P."/>
            <person name="Bolotin A."/>
            <person name="Borchert S."/>
            <person name="Borriss R."/>
            <person name="Boursier L."/>
            <person name="Brans A."/>
            <person name="Braun M."/>
            <person name="Brignell S.C."/>
            <person name="Bron S."/>
            <person name="Brouillet S."/>
            <person name="Bruschi C.V."/>
            <person name="Caldwell B."/>
            <person name="Capuano V."/>
            <person name="Carter N.M."/>
            <person name="Choi S.-K."/>
            <person name="Codani J.-J."/>
            <person name="Connerton I.F."/>
            <person name="Cummings N.J."/>
            <person name="Daniel R.A."/>
            <person name="Denizot F."/>
            <person name="Devine K.M."/>
            <person name="Duesterhoeft A."/>
            <person name="Ehrlich S.D."/>
            <person name="Emmerson P.T."/>
            <person name="Entian K.-D."/>
            <person name="Errington J."/>
            <person name="Fabret C."/>
            <person name="Ferrari E."/>
            <person name="Foulger D."/>
            <person name="Fritz C."/>
            <person name="Fujita M."/>
            <person name="Fujita Y."/>
            <person name="Fuma S."/>
            <person name="Galizzi A."/>
            <person name="Galleron N."/>
            <person name="Ghim S.-Y."/>
            <person name="Glaser P."/>
            <person name="Goffeau A."/>
            <person name="Golightly E.J."/>
            <person name="Grandi G."/>
            <person name="Guiseppi G."/>
            <person name="Guy B.J."/>
            <person name="Haga K."/>
            <person name="Haiech J."/>
            <person name="Harwood C.R."/>
            <person name="Henaut A."/>
            <person name="Hilbert H."/>
            <person name="Holsappel S."/>
            <person name="Hosono S."/>
            <person name="Hullo M.-F."/>
            <person name="Itaya M."/>
            <person name="Jones L.-M."/>
            <person name="Joris B."/>
            <person name="Karamata D."/>
            <person name="Kasahara Y."/>
            <person name="Klaerr-Blanchard M."/>
            <person name="Klein C."/>
            <person name="Kobayashi Y."/>
            <person name="Koetter P."/>
            <person name="Koningstein G."/>
            <person name="Krogh S."/>
            <person name="Kumano M."/>
            <person name="Kurita K."/>
            <person name="Lapidus A."/>
            <person name="Lardinois S."/>
            <person name="Lauber J."/>
            <person name="Lazarevic V."/>
            <person name="Lee S.-M."/>
            <person name="Levine A."/>
            <person name="Liu H."/>
            <person name="Masuda S."/>
            <person name="Mauel C."/>
            <person name="Medigue C."/>
            <person name="Medina N."/>
            <person name="Mellado R.P."/>
            <person name="Mizuno M."/>
            <person name="Moestl D."/>
            <person name="Nakai S."/>
            <person name="Noback M."/>
            <person name="Noone D."/>
            <person name="O'Reilly M."/>
            <person name="Ogawa K."/>
            <person name="Ogiwara A."/>
            <person name="Oudega B."/>
            <person name="Park S.-H."/>
            <person name="Parro V."/>
            <person name="Pohl T.M."/>
            <person name="Portetelle D."/>
            <person name="Porwollik S."/>
            <person name="Prescott A.M."/>
            <person name="Presecan E."/>
            <person name="Pujic P."/>
            <person name="Purnelle B."/>
            <person name="Rapoport G."/>
            <person name="Rey M."/>
            <person name="Reynolds S."/>
            <person name="Rieger M."/>
            <person name="Rivolta C."/>
            <person name="Rocha E."/>
            <person name="Roche B."/>
            <person name="Rose M."/>
            <person name="Sadaie Y."/>
            <person name="Sato T."/>
            <person name="Scanlan E."/>
            <person name="Schleich S."/>
            <person name="Schroeter R."/>
            <person name="Scoffone F."/>
            <person name="Sekiguchi J."/>
            <person name="Sekowska A."/>
            <person name="Seror S.J."/>
            <person name="Serror P."/>
            <person name="Shin B.-S."/>
            <person name="Soldo B."/>
            <person name="Sorokin A."/>
            <person name="Tacconi E."/>
            <person name="Takagi T."/>
            <person name="Takahashi H."/>
            <person name="Takemaru K."/>
            <person name="Takeuchi M."/>
            <person name="Tamakoshi A."/>
            <person name="Tanaka T."/>
            <person name="Terpstra P."/>
            <person name="Tognoni A."/>
            <person name="Tosato V."/>
            <person name="Uchiyama S."/>
            <person name="Vandenbol M."/>
            <person name="Vannier F."/>
            <person name="Vassarotti A."/>
            <person name="Viari A."/>
            <person name="Wambutt R."/>
            <person name="Wedler E."/>
            <person name="Wedler H."/>
            <person name="Weitzenegger T."/>
            <person name="Winters P."/>
            <person name="Wipat A."/>
            <person name="Yamamoto H."/>
            <person name="Yamane K."/>
            <person name="Yasumoto K."/>
            <person name="Yata K."/>
            <person name="Yoshida K."/>
            <person name="Yoshikawa H.-F."/>
            <person name="Zumstein E."/>
            <person name="Yoshikawa H."/>
            <person name="Danchin A."/>
        </authorList>
    </citation>
    <scope>NUCLEOTIDE SEQUENCE [LARGE SCALE GENOMIC DNA]</scope>
    <source>
        <strain>168</strain>
    </source>
</reference>
<reference key="4">
    <citation type="journal article" date="2000" name="Microbiology">
        <title>Proteome analysis of Bacillus subtilis extracellular proteins: a two-dimensional protein electrophoretic study.</title>
        <authorList>
            <person name="Hirose I."/>
            <person name="Sano K."/>
            <person name="Shioda I."/>
            <person name="Kumano M."/>
            <person name="Nakamura K."/>
            <person name="Yamane K."/>
        </authorList>
    </citation>
    <scope>PROTEIN SEQUENCE OF 32-41 AND 414-424</scope>
    <scope>SUBCELLULAR LOCATION</scope>
    <source>
        <strain>168</strain>
    </source>
</reference>
<reference key="5">
    <citation type="journal article" date="2002" name="Proteomics">
        <title>Stabilization of cell wall proteins in Bacillus subtilis: a proteomic approach.</title>
        <authorList>
            <person name="Antelmann H."/>
            <person name="Yamamoto H."/>
            <person name="Sekiguchi J."/>
            <person name="Hecker M."/>
        </authorList>
    </citation>
    <scope>INDUCTION</scope>
    <scope>DISRUPTION PHENOTYPE</scope>
    <scope>SUBCELLULAR LOCATION</scope>
    <scope>IDENTIFICATION BY MASS SPECTROMETRY</scope>
    <source>
        <strain>168</strain>
    </source>
</reference>
<dbReference type="EC" id="3.4.21.-"/>
<dbReference type="EMBL" id="U58981">
    <property type="protein sequence ID" value="AAC25926.1"/>
    <property type="molecule type" value="Genomic_DNA"/>
</dbReference>
<dbReference type="EMBL" id="Y09476">
    <property type="protein sequence ID" value="CAA70641.1"/>
    <property type="molecule type" value="Genomic_DNA"/>
</dbReference>
<dbReference type="EMBL" id="AL009126">
    <property type="protein sequence ID" value="CAB12917.1"/>
    <property type="molecule type" value="Genomic_DNA"/>
</dbReference>
<dbReference type="PIR" id="F69730">
    <property type="entry name" value="F69730"/>
</dbReference>
<dbReference type="RefSeq" id="NP_388958.1">
    <property type="nucleotide sequence ID" value="NC_000964.3"/>
</dbReference>
<dbReference type="RefSeq" id="WP_003244653.1">
    <property type="nucleotide sequence ID" value="NZ_OZ025638.1"/>
</dbReference>
<dbReference type="SMR" id="P54423"/>
<dbReference type="FunCoup" id="P54423">
    <property type="interactions" value="15"/>
</dbReference>
<dbReference type="IntAct" id="P54423">
    <property type="interactions" value="15"/>
</dbReference>
<dbReference type="STRING" id="224308.BSU10770"/>
<dbReference type="MEROPS" id="S08.004"/>
<dbReference type="jPOST" id="P54423"/>
<dbReference type="PaxDb" id="224308-BSU10770"/>
<dbReference type="EnsemblBacteria" id="CAB12917">
    <property type="protein sequence ID" value="CAB12917"/>
    <property type="gene ID" value="BSU_10770"/>
</dbReference>
<dbReference type="GeneID" id="936350"/>
<dbReference type="KEGG" id="bsu:BSU10770"/>
<dbReference type="PATRIC" id="fig|224308.179.peg.1158"/>
<dbReference type="eggNOG" id="COG1404">
    <property type="taxonomic scope" value="Bacteria"/>
</dbReference>
<dbReference type="InParanoid" id="P54423"/>
<dbReference type="OrthoDB" id="9798386at2"/>
<dbReference type="BioCyc" id="BSUB:BSU10770-MONOMER"/>
<dbReference type="Proteomes" id="UP000001570">
    <property type="component" value="Chromosome"/>
</dbReference>
<dbReference type="GO" id="GO:0005576">
    <property type="term" value="C:extracellular region"/>
    <property type="evidence" value="ECO:0007669"/>
    <property type="project" value="UniProtKB-KW"/>
</dbReference>
<dbReference type="GO" id="GO:0004252">
    <property type="term" value="F:serine-type endopeptidase activity"/>
    <property type="evidence" value="ECO:0007669"/>
    <property type="project" value="InterPro"/>
</dbReference>
<dbReference type="GO" id="GO:0071555">
    <property type="term" value="P:cell wall organization"/>
    <property type="evidence" value="ECO:0007669"/>
    <property type="project" value="UniProtKB-KW"/>
</dbReference>
<dbReference type="GO" id="GO:0006508">
    <property type="term" value="P:proteolysis"/>
    <property type="evidence" value="ECO:0007669"/>
    <property type="project" value="UniProtKB-KW"/>
</dbReference>
<dbReference type="CDD" id="cd07484">
    <property type="entry name" value="Peptidases_S8_Thermitase_like"/>
    <property type="match status" value="1"/>
</dbReference>
<dbReference type="Gene3D" id="2.60.40.10">
    <property type="entry name" value="Immunoglobulins"/>
    <property type="match status" value="1"/>
</dbReference>
<dbReference type="Gene3D" id="3.40.50.200">
    <property type="entry name" value="Peptidase S8/S53 domain"/>
    <property type="match status" value="1"/>
</dbReference>
<dbReference type="InterPro" id="IPR041498">
    <property type="entry name" value="Big_6"/>
</dbReference>
<dbReference type="InterPro" id="IPR013783">
    <property type="entry name" value="Ig-like_fold"/>
</dbReference>
<dbReference type="InterPro" id="IPR000209">
    <property type="entry name" value="Peptidase_S8/S53_dom"/>
</dbReference>
<dbReference type="InterPro" id="IPR036852">
    <property type="entry name" value="Peptidase_S8/S53_dom_sf"/>
</dbReference>
<dbReference type="InterPro" id="IPR051048">
    <property type="entry name" value="Peptidase_S8/S53_subtilisin"/>
</dbReference>
<dbReference type="InterPro" id="IPR022398">
    <property type="entry name" value="Peptidase_S8_His-AS"/>
</dbReference>
<dbReference type="InterPro" id="IPR023828">
    <property type="entry name" value="Peptidase_S8_Ser-AS"/>
</dbReference>
<dbReference type="InterPro" id="IPR015500">
    <property type="entry name" value="Peptidase_S8_subtilisin-rel"/>
</dbReference>
<dbReference type="InterPro" id="IPR034084">
    <property type="entry name" value="Thermitase-like_dom"/>
</dbReference>
<dbReference type="PANTHER" id="PTHR43399:SF4">
    <property type="entry name" value="CELL WALL-ASSOCIATED PROTEASE"/>
    <property type="match status" value="1"/>
</dbReference>
<dbReference type="PANTHER" id="PTHR43399">
    <property type="entry name" value="SUBTILISIN-RELATED"/>
    <property type="match status" value="1"/>
</dbReference>
<dbReference type="Pfam" id="PF17936">
    <property type="entry name" value="Big_6"/>
    <property type="match status" value="1"/>
</dbReference>
<dbReference type="Pfam" id="PF00082">
    <property type="entry name" value="Peptidase_S8"/>
    <property type="match status" value="1"/>
</dbReference>
<dbReference type="PRINTS" id="PR00723">
    <property type="entry name" value="SUBTILISIN"/>
</dbReference>
<dbReference type="SUPFAM" id="SSF52743">
    <property type="entry name" value="Subtilisin-like"/>
    <property type="match status" value="1"/>
</dbReference>
<dbReference type="PROSITE" id="PS51892">
    <property type="entry name" value="SUBTILASE"/>
    <property type="match status" value="1"/>
</dbReference>
<dbReference type="PROSITE" id="PS00137">
    <property type="entry name" value="SUBTILASE_HIS"/>
    <property type="match status" value="1"/>
</dbReference>
<dbReference type="PROSITE" id="PS00138">
    <property type="entry name" value="SUBTILASE_SER"/>
    <property type="match status" value="1"/>
</dbReference>
<sequence length="894" mass="96488">MKRRKFSSVVAAVLIFALIFSLFSPGTKAAAAGAIDQAAALENGKEQTGAMKEPEQVKWYKVTPGATDIQKNSHMALTVKSDSVLNVSVYPSKEKALKDETFEMYRSFTAEDGKSEVIFPYAWSGPYYVKVEYLGEEEPEDGGTAEAAAEAKYTIGYKGTKKQPSDLEEEEACPVEMSVDQKKSGKGILDKLRSIRDEQLSQTAEGKELTSLYYKAAPFIVAKLALNKTARNEIYQDLVTLKPLFDDVSENGASSSYKVTEKDQKAINRLYDKALQSVPSFLKEEIKKQADRLNMKQLQGKTAGAILTENNIAAKSEVQTTKVIFKVKDNKSLSSVHNEMKGFSASAQSKKDISNVKKAKKLFDNLYSFELPKDEKQNGAYTASAKRVKSAAATLSKMSNVEFAEPVQEYKSLANDIQYPYQWPLKNNGENGGVKNADVKYEPANTLLSKRKLNDTLIAVVDTGVDSTLADLKGKVRTDLGHNFVGRNNNAMDDQGHGTHVAGIIAAQSDNGYSMTGLNAKAKIIPVKVLDSAGSGDTEQIALGIKYAADKGAKVINLSLGGGYSRVLEFALKYAADKNVLIAAASGNDGENALSYPASSKYVMSVGATNRMDMTADFSNYGKGLDISAPGSDIPSLVPNGNVTYMSGTSMATPYAAAAAGLLFAQNPKLKRTEVEDMLKKTADDISFESVDGGEEELYDDYGDPIEIPKTPGVDWHSGYGRLNVMKAVSAADLQLKVNKLESTQTAVRGSAKEGTLIEVMNGKKKLGSAKAGKDNAFKVNIATQKQDQVLYLKATKGDAKTSYKVVVVKGKPSGTPKVNAVKTKDTAVKGKANSKAMIRVKNKSKKVIASAKADAKGTFSVKIKKQKAGTVLYVTAVDTDKKESKEAKVVVEK</sequence>
<name>WPRA_BACSU</name>
<proteinExistence type="evidence at protein level"/>
<comment type="function">
    <text evidence="5">CWBP52 is a serine-type protease that could be involved in proteoglycan peptide bridges.</text>
</comment>
<comment type="activity regulation">
    <text evidence="5">Inhibited by PMSF.</text>
</comment>
<comment type="subcellular location">
    <subcellularLocation>
        <location evidence="3 4">Secreted</location>
        <location evidence="3 4">Cell wall</location>
    </subcellularLocation>
    <text>Released into the medium.</text>
</comment>
<comment type="induction">
    <text evidence="4">In stationary phase.</text>
</comment>
<comment type="PTM">
    <text>Proteolytically cleaved to yield CWBP23 and CWBP52.</text>
</comment>
<comment type="disruption phenotype">
    <text evidence="4 5">Cells lacking this gene have no discernible phenotype with respect to sporulation, motility or growth (PubMed:9004506). Significantly increased amounts of BglS, Epr, Vpr, YclQ and YwsB; decreased amounts of AbnA, PorE, Csn, YncM, Yxal and YweA are detected in the extracellular proteome (PubMed:11987133).</text>
</comment>
<comment type="similarity">
    <text evidence="6">Belongs to the peptidase S8 family.</text>
</comment>
<comment type="caution">
    <text evidence="6">The CWBP52 polypeptide was originally called CWBP55 based on its apparent molecular weight.</text>
</comment>
<feature type="signal peptide" evidence="3 5">
    <location>
        <begin position="1"/>
        <end position="31"/>
    </location>
</feature>
<feature type="chain" id="PRO_0000027197" description="Cell wall-associated protease">
    <location>
        <begin position="32"/>
        <end position="894"/>
    </location>
</feature>
<feature type="chain" id="PRO_0000027198" description="Cell wall-associated polypeptide CWBP23">
    <location>
        <begin position="32"/>
        <end status="unknown"/>
    </location>
</feature>
<feature type="propeptide" id="PRO_0000027199" evidence="1">
    <location>
        <begin status="unknown"/>
        <end position="413"/>
    </location>
</feature>
<feature type="chain" id="PRO_0000027200" description="Cell wall-associated polypeptide CWBP52">
    <location>
        <begin position="414"/>
        <end position="894"/>
    </location>
</feature>
<feature type="domain" description="Peptidase S8" evidence="2">
    <location>
        <begin position="422"/>
        <end position="729"/>
    </location>
</feature>
<feature type="active site" description="Charge relay system" evidence="2">
    <location>
        <position position="462"/>
    </location>
</feature>
<feature type="active site" description="Charge relay system" evidence="2">
    <location>
        <position position="497"/>
    </location>
</feature>
<feature type="active site" description="Charge relay system" evidence="2">
    <location>
        <position position="650"/>
    </location>
</feature>
<feature type="sequence conflict" description="In Ref. 1; AAC25926." evidence="6" ref="1">
    <original>V</original>
    <variation>A</variation>
    <location>
        <position position="9"/>
    </location>
</feature>
<feature type="sequence conflict" description="In Ref. 1; AAC25926." evidence="6" ref="1">
    <original>L</original>
    <variation>I</variation>
    <location>
        <position position="14"/>
    </location>
</feature>
<feature type="sequence conflict" description="In Ref. 4; AA sequence." evidence="6" ref="4">
    <location>
        <position position="40"/>
    </location>
</feature>
<organism>
    <name type="scientific">Bacillus subtilis (strain 168)</name>
    <dbReference type="NCBI Taxonomy" id="224308"/>
    <lineage>
        <taxon>Bacteria</taxon>
        <taxon>Bacillati</taxon>
        <taxon>Bacillota</taxon>
        <taxon>Bacilli</taxon>
        <taxon>Bacillales</taxon>
        <taxon>Bacillaceae</taxon>
        <taxon>Bacillus</taxon>
    </lineage>
</organism>
<gene>
    <name type="primary">wprA</name>
    <name type="synonym">yisM</name>
    <name type="ordered locus">BSU10770</name>
</gene>
<keyword id="KW-0134">Cell wall</keyword>
<keyword id="KW-0961">Cell wall biogenesis/degradation</keyword>
<keyword id="KW-0903">Direct protein sequencing</keyword>
<keyword id="KW-0378">Hydrolase</keyword>
<keyword id="KW-0645">Protease</keyword>
<keyword id="KW-1185">Reference proteome</keyword>
<keyword id="KW-0964">Secreted</keyword>
<keyword id="KW-0720">Serine protease</keyword>
<keyword id="KW-0732">Signal</keyword>
<keyword id="KW-0865">Zymogen</keyword>
<accession>P54423</accession>
<accession>O06726</accession>
<evidence type="ECO:0000255" key="1"/>
<evidence type="ECO:0000255" key="2">
    <source>
        <dbReference type="PROSITE-ProRule" id="PRU01240"/>
    </source>
</evidence>
<evidence type="ECO:0000269" key="3">
    <source>
    </source>
</evidence>
<evidence type="ECO:0000269" key="4">
    <source>
    </source>
</evidence>
<evidence type="ECO:0000269" key="5">
    <source>
    </source>
</evidence>
<evidence type="ECO:0000305" key="6"/>